<feature type="chain" id="PRO_0000150187" description="Putative phosphoserine aminotransferase">
    <location>
        <begin position="1"/>
        <end position="376"/>
    </location>
</feature>
<feature type="region of interest" description="Disordered" evidence="2">
    <location>
        <begin position="1"/>
        <end position="30"/>
    </location>
</feature>
<feature type="binding site" evidence="1">
    <location>
        <position position="50"/>
    </location>
    <ligand>
        <name>L-glutamate</name>
        <dbReference type="ChEBI" id="CHEBI:29985"/>
    </ligand>
</feature>
<feature type="binding site" evidence="1">
    <location>
        <begin position="84"/>
        <end position="85"/>
    </location>
    <ligand>
        <name>pyridoxal 5'-phosphate</name>
        <dbReference type="ChEBI" id="CHEBI:597326"/>
    </ligand>
</feature>
<feature type="binding site" evidence="1">
    <location>
        <position position="108"/>
    </location>
    <ligand>
        <name>pyridoxal 5'-phosphate</name>
        <dbReference type="ChEBI" id="CHEBI:597326"/>
    </ligand>
</feature>
<feature type="binding site" evidence="1">
    <location>
        <position position="154"/>
    </location>
    <ligand>
        <name>pyridoxal 5'-phosphate</name>
        <dbReference type="ChEBI" id="CHEBI:597326"/>
    </ligand>
</feature>
<feature type="binding site" evidence="1">
    <location>
        <position position="176"/>
    </location>
    <ligand>
        <name>pyridoxal 5'-phosphate</name>
        <dbReference type="ChEBI" id="CHEBI:597326"/>
    </ligand>
</feature>
<feature type="binding site" evidence="1">
    <location>
        <position position="199"/>
    </location>
    <ligand>
        <name>pyridoxal 5'-phosphate</name>
        <dbReference type="ChEBI" id="CHEBI:597326"/>
    </ligand>
</feature>
<feature type="binding site" evidence="1">
    <location>
        <begin position="251"/>
        <end position="252"/>
    </location>
    <ligand>
        <name>pyridoxal 5'-phosphate</name>
        <dbReference type="ChEBI" id="CHEBI:597326"/>
    </ligand>
</feature>
<feature type="modified residue" description="N6-(pyridoxal phosphate)lysine" evidence="1">
    <location>
        <position position="200"/>
    </location>
</feature>
<comment type="function">
    <text evidence="1">Catalyzes the reversible conversion of 3-phosphohydroxypyruvate to phosphoserine and of 3-hydroxy-2-oxo-4-phosphonooxybutanoate to phosphohydroxythreonine.</text>
</comment>
<comment type="catalytic activity">
    <reaction evidence="1">
        <text>O-phospho-L-serine + 2-oxoglutarate = 3-phosphooxypyruvate + L-glutamate</text>
        <dbReference type="Rhea" id="RHEA:14329"/>
        <dbReference type="ChEBI" id="CHEBI:16810"/>
        <dbReference type="ChEBI" id="CHEBI:18110"/>
        <dbReference type="ChEBI" id="CHEBI:29985"/>
        <dbReference type="ChEBI" id="CHEBI:57524"/>
        <dbReference type="EC" id="2.6.1.52"/>
    </reaction>
</comment>
<comment type="catalytic activity">
    <reaction evidence="1">
        <text>4-(phosphooxy)-L-threonine + 2-oxoglutarate = (R)-3-hydroxy-2-oxo-4-phosphooxybutanoate + L-glutamate</text>
        <dbReference type="Rhea" id="RHEA:16573"/>
        <dbReference type="ChEBI" id="CHEBI:16810"/>
        <dbReference type="ChEBI" id="CHEBI:29985"/>
        <dbReference type="ChEBI" id="CHEBI:58452"/>
        <dbReference type="ChEBI" id="CHEBI:58538"/>
        <dbReference type="EC" id="2.6.1.52"/>
    </reaction>
</comment>
<comment type="cofactor">
    <cofactor evidence="1">
        <name>pyridoxal 5'-phosphate</name>
        <dbReference type="ChEBI" id="CHEBI:597326"/>
    </cofactor>
    <text evidence="1">Binds 1 pyridoxal phosphate per subunit.</text>
</comment>
<comment type="pathway">
    <text evidence="1">Amino-acid biosynthesis; L-serine biosynthesis; L-serine from 3-phospho-D-glycerate: step 2/3.</text>
</comment>
<comment type="pathway">
    <text evidence="1">Cofactor biosynthesis; pyridoxine 5'-phosphate biosynthesis; pyridoxine 5'-phosphate from D-erythrose 4-phosphate: step 3/5.</text>
</comment>
<comment type="subunit">
    <text evidence="1">Homodimer.</text>
</comment>
<comment type="subcellular location">
    <subcellularLocation>
        <location evidence="1">Cytoplasm</location>
    </subcellularLocation>
</comment>
<comment type="similarity">
    <text evidence="1">Belongs to the class-V pyridoxal-phosphate-dependent aminotransferase family. SerC subfamily.</text>
</comment>
<keyword id="KW-0028">Amino-acid biosynthesis</keyword>
<keyword id="KW-0032">Aminotransferase</keyword>
<keyword id="KW-0963">Cytoplasm</keyword>
<keyword id="KW-0663">Pyridoxal phosphate</keyword>
<keyword id="KW-0664">Pyridoxine biosynthesis</keyword>
<keyword id="KW-1185">Reference proteome</keyword>
<keyword id="KW-0718">Serine biosynthesis</keyword>
<keyword id="KW-0808">Transferase</keyword>
<reference key="1">
    <citation type="journal article" date="2001" name="Nature">
        <title>Massive gene decay in the leprosy bacillus.</title>
        <authorList>
            <person name="Cole S.T."/>
            <person name="Eiglmeier K."/>
            <person name="Parkhill J."/>
            <person name="James K.D."/>
            <person name="Thomson N.R."/>
            <person name="Wheeler P.R."/>
            <person name="Honore N."/>
            <person name="Garnier T."/>
            <person name="Churcher C.M."/>
            <person name="Harris D.E."/>
            <person name="Mungall K.L."/>
            <person name="Basham D."/>
            <person name="Brown D."/>
            <person name="Chillingworth T."/>
            <person name="Connor R."/>
            <person name="Davies R.M."/>
            <person name="Devlin K."/>
            <person name="Duthoy S."/>
            <person name="Feltwell T."/>
            <person name="Fraser A."/>
            <person name="Hamlin N."/>
            <person name="Holroyd S."/>
            <person name="Hornsby T."/>
            <person name="Jagels K."/>
            <person name="Lacroix C."/>
            <person name="Maclean J."/>
            <person name="Moule S."/>
            <person name="Murphy L.D."/>
            <person name="Oliver K."/>
            <person name="Quail M.A."/>
            <person name="Rajandream M.A."/>
            <person name="Rutherford K.M."/>
            <person name="Rutter S."/>
            <person name="Seeger K."/>
            <person name="Simon S."/>
            <person name="Simmonds M."/>
            <person name="Skelton J."/>
            <person name="Squares R."/>
            <person name="Squares S."/>
            <person name="Stevens K."/>
            <person name="Taylor K."/>
            <person name="Whitehead S."/>
            <person name="Woodward J.R."/>
            <person name="Barrell B.G."/>
        </authorList>
    </citation>
    <scope>NUCLEOTIDE SEQUENCE [LARGE SCALE GENOMIC DNA]</scope>
    <source>
        <strain>TN</strain>
    </source>
</reference>
<accession>O33062</accession>
<name>SERC_MYCLE</name>
<dbReference type="EC" id="2.6.1.52" evidence="1"/>
<dbReference type="EMBL" id="Z99494">
    <property type="protein sequence ID" value="CAB16677.1"/>
    <property type="molecule type" value="Genomic_DNA"/>
</dbReference>
<dbReference type="EMBL" id="AL583924">
    <property type="protein sequence ID" value="CAC31091.1"/>
    <property type="molecule type" value="Genomic_DNA"/>
</dbReference>
<dbReference type="PIR" id="T45349">
    <property type="entry name" value="T45349"/>
</dbReference>
<dbReference type="RefSeq" id="NP_302409.1">
    <property type="nucleotide sequence ID" value="NC_002677.1"/>
</dbReference>
<dbReference type="RefSeq" id="WP_010908729.1">
    <property type="nucleotide sequence ID" value="NC_002677.1"/>
</dbReference>
<dbReference type="SMR" id="O33062"/>
<dbReference type="STRING" id="272631.gene:17575989"/>
<dbReference type="KEGG" id="mle:ML2136"/>
<dbReference type="PATRIC" id="fig|272631.5.peg.4038"/>
<dbReference type="Leproma" id="ML2136"/>
<dbReference type="eggNOG" id="COG1932">
    <property type="taxonomic scope" value="Bacteria"/>
</dbReference>
<dbReference type="HOGENOM" id="CLU_061974_0_0_11"/>
<dbReference type="OrthoDB" id="975012at2"/>
<dbReference type="UniPathway" id="UPA00135">
    <property type="reaction ID" value="UER00197"/>
</dbReference>
<dbReference type="UniPathway" id="UPA00244">
    <property type="reaction ID" value="UER00311"/>
</dbReference>
<dbReference type="Proteomes" id="UP000000806">
    <property type="component" value="Chromosome"/>
</dbReference>
<dbReference type="GO" id="GO:0005737">
    <property type="term" value="C:cytoplasm"/>
    <property type="evidence" value="ECO:0007669"/>
    <property type="project" value="UniProtKB-SubCell"/>
</dbReference>
<dbReference type="GO" id="GO:0008453">
    <property type="term" value="F:alanine-glyoxylate transaminase activity"/>
    <property type="evidence" value="ECO:0007669"/>
    <property type="project" value="TreeGrafter"/>
</dbReference>
<dbReference type="GO" id="GO:0004760">
    <property type="term" value="F:L-serine-pyruvate transaminase activity"/>
    <property type="evidence" value="ECO:0007669"/>
    <property type="project" value="TreeGrafter"/>
</dbReference>
<dbReference type="GO" id="GO:0004648">
    <property type="term" value="F:O-phospho-L-serine:2-oxoglutarate aminotransferase activity"/>
    <property type="evidence" value="ECO:0007669"/>
    <property type="project" value="UniProtKB-UniRule"/>
</dbReference>
<dbReference type="GO" id="GO:0030170">
    <property type="term" value="F:pyridoxal phosphate binding"/>
    <property type="evidence" value="ECO:0007669"/>
    <property type="project" value="UniProtKB-UniRule"/>
</dbReference>
<dbReference type="GO" id="GO:0019265">
    <property type="term" value="P:glycine biosynthetic process, by transamination of glyoxylate"/>
    <property type="evidence" value="ECO:0007669"/>
    <property type="project" value="TreeGrafter"/>
</dbReference>
<dbReference type="GO" id="GO:0006564">
    <property type="term" value="P:L-serine biosynthetic process"/>
    <property type="evidence" value="ECO:0007669"/>
    <property type="project" value="UniProtKB-UniRule"/>
</dbReference>
<dbReference type="GO" id="GO:0008615">
    <property type="term" value="P:pyridoxine biosynthetic process"/>
    <property type="evidence" value="ECO:0007669"/>
    <property type="project" value="UniProtKB-UniRule"/>
</dbReference>
<dbReference type="Gene3D" id="3.90.1150.10">
    <property type="entry name" value="Aspartate Aminotransferase, domain 1"/>
    <property type="match status" value="1"/>
</dbReference>
<dbReference type="Gene3D" id="3.40.640.10">
    <property type="entry name" value="Type I PLP-dependent aspartate aminotransferase-like (Major domain)"/>
    <property type="match status" value="1"/>
</dbReference>
<dbReference type="HAMAP" id="MF_00160">
    <property type="entry name" value="SerC_aminotrans_5"/>
    <property type="match status" value="1"/>
</dbReference>
<dbReference type="InterPro" id="IPR000192">
    <property type="entry name" value="Aminotrans_V_dom"/>
</dbReference>
<dbReference type="InterPro" id="IPR022278">
    <property type="entry name" value="Pser_aminoTfrase"/>
</dbReference>
<dbReference type="InterPro" id="IPR006272">
    <property type="entry name" value="Pser_aminoTfrase_mycobac"/>
</dbReference>
<dbReference type="InterPro" id="IPR015424">
    <property type="entry name" value="PyrdxlP-dep_Trfase"/>
</dbReference>
<dbReference type="InterPro" id="IPR015421">
    <property type="entry name" value="PyrdxlP-dep_Trfase_major"/>
</dbReference>
<dbReference type="InterPro" id="IPR015422">
    <property type="entry name" value="PyrdxlP-dep_Trfase_small"/>
</dbReference>
<dbReference type="NCBIfam" id="TIGR01366">
    <property type="entry name" value="serC_3"/>
    <property type="match status" value="1"/>
</dbReference>
<dbReference type="PANTHER" id="PTHR21152:SF40">
    <property type="entry name" value="ALANINE--GLYOXYLATE AMINOTRANSFERASE"/>
    <property type="match status" value="1"/>
</dbReference>
<dbReference type="PANTHER" id="PTHR21152">
    <property type="entry name" value="AMINOTRANSFERASE CLASS V"/>
    <property type="match status" value="1"/>
</dbReference>
<dbReference type="Pfam" id="PF00266">
    <property type="entry name" value="Aminotran_5"/>
    <property type="match status" value="1"/>
</dbReference>
<dbReference type="PIRSF" id="PIRSF000525">
    <property type="entry name" value="SerC"/>
    <property type="match status" value="1"/>
</dbReference>
<dbReference type="SUPFAM" id="SSF53383">
    <property type="entry name" value="PLP-dependent transferases"/>
    <property type="match status" value="1"/>
</dbReference>
<protein>
    <recommendedName>
        <fullName>Putative phosphoserine aminotransferase</fullName>
        <ecNumber evidence="1">2.6.1.52</ecNumber>
    </recommendedName>
    <alternativeName>
        <fullName evidence="1">Phosphohydroxythreonine aminotransferase</fullName>
        <shortName evidence="1">PSAT</shortName>
    </alternativeName>
</protein>
<evidence type="ECO:0000255" key="1">
    <source>
        <dbReference type="HAMAP-Rule" id="MF_00160"/>
    </source>
</evidence>
<evidence type="ECO:0000256" key="2">
    <source>
        <dbReference type="SAM" id="MobiDB-lite"/>
    </source>
</evidence>
<organism>
    <name type="scientific">Mycobacterium leprae (strain TN)</name>
    <dbReference type="NCBI Taxonomy" id="272631"/>
    <lineage>
        <taxon>Bacteria</taxon>
        <taxon>Bacillati</taxon>
        <taxon>Actinomycetota</taxon>
        <taxon>Actinomycetes</taxon>
        <taxon>Mycobacteriales</taxon>
        <taxon>Mycobacteriaceae</taxon>
        <taxon>Mycobacterium</taxon>
    </lineage>
</organism>
<gene>
    <name evidence="1" type="primary">serC</name>
    <name type="ordered locus">ML2136</name>
    <name type="ORF">MLCB57.37c</name>
</gene>
<proteinExistence type="inferred from homology"/>
<sequence>MADQLTPSLDIPAALKPRDGRFGSGPSKVRPEQLQALTNTAATLFGTSHRQAPVKNLVGRVRAGLAELFSLPDGYQVILGNGGATAFWDAAAFGLIDKRSLHLTYGEFSSKFASAVAKNPFIDEPIVIKSDPGSAPKPTGDPSVDVIAWAHNETSTGVAVPVRRPTGSGGALIAIDATSGAGGLPVDIAQTDAYYFAPQKNFASDGGLWLAIMSPAALARVDSITASGRWVPDFLSLPIAVENSLKNQTYNTPAICTLALLAEQLDWLLGNGGLEWAVKRTADSSQRLYAWAEDRPYTTPFVVDPALRSQVVGTIDFTDDVDAAAVAKILRANGIIDTEPYRKLGRNQLRVAMFPAVEPDDVRALTECVDWIVERL</sequence>